<keyword id="KW-1015">Disulfide bond</keyword>
<keyword id="KW-0256">Endoplasmic reticulum</keyword>
<keyword id="KW-0333">Golgi apparatus</keyword>
<keyword id="KW-0445">Lipid transport</keyword>
<keyword id="KW-0446">Lipid-binding</keyword>
<keyword id="KW-1185">Reference proteome</keyword>
<keyword id="KW-0732">Signal</keyword>
<keyword id="KW-0813">Transport</keyword>
<name>MTP_MESAU</name>
<gene>
    <name type="primary">MTTP</name>
    <name type="synonym">MTP</name>
</gene>
<comment type="function">
    <text evidence="1 2">Catalyzes the transport of triglyceride, cholesteryl ester, and phospholipid between phospholipid surfaces (By similarity). Required for the assembly and secretion of plasma lipoproteins that contain apolipoprotein B (By similarity). May be involved in regulating cholesteryl ester biosynthesis in cells that produce lipoproteins (By similarity).</text>
</comment>
<comment type="catalytic activity">
    <reaction evidence="2">
        <text>a 1,2-diacyl-sn-glycero-3-phosphocholine(in) = a 1,2-diacyl-sn-glycero-3-phosphocholine(out)</text>
        <dbReference type="Rhea" id="RHEA:38571"/>
        <dbReference type="ChEBI" id="CHEBI:57643"/>
    </reaction>
    <physiologicalReaction direction="left-to-right" evidence="2">
        <dbReference type="Rhea" id="RHEA:38572"/>
    </physiologicalReaction>
</comment>
<comment type="catalytic activity">
    <reaction evidence="2">
        <text>a 1,2-diacyl-sn-glycero-3-phosphoethanolamine(in) = a 1,2-diacyl-sn-glycero-3-phosphoethanolamine(out)</text>
        <dbReference type="Rhea" id="RHEA:38895"/>
        <dbReference type="ChEBI" id="CHEBI:64612"/>
    </reaction>
    <physiologicalReaction direction="left-to-right" evidence="2">
        <dbReference type="Rhea" id="RHEA:38896"/>
    </physiologicalReaction>
</comment>
<comment type="catalytic activity">
    <reaction evidence="2">
        <text>a cholesterol ester(in) = a cholesterol ester(out)</text>
        <dbReference type="Rhea" id="RHEA:39007"/>
        <dbReference type="ChEBI" id="CHEBI:17002"/>
    </reaction>
    <physiologicalReaction direction="left-to-right" evidence="2">
        <dbReference type="Rhea" id="RHEA:39008"/>
    </physiologicalReaction>
</comment>
<comment type="catalytic activity">
    <reaction evidence="2">
        <text>a triacyl-sn-glycerol(in) = a triacyl-sn-glycerol(out)</text>
        <dbReference type="Rhea" id="RHEA:39011"/>
        <dbReference type="ChEBI" id="CHEBI:64615"/>
    </reaction>
    <physiologicalReaction direction="left-to-right" evidence="2">
        <dbReference type="Rhea" id="RHEA:39012"/>
    </physiologicalReaction>
</comment>
<comment type="subunit">
    <text evidence="1 2">Heterodimer; heterodimerizes with the protein disulfide isomerase (P4HB/PDI). Interacts with APOB (By similarity). Interacts with PRAP1 (By similarity).</text>
</comment>
<comment type="subcellular location">
    <subcellularLocation>
        <location evidence="2">Endoplasmic reticulum</location>
    </subcellularLocation>
    <subcellularLocation>
        <location evidence="2">Golgi apparatus</location>
    </subcellularLocation>
    <text evidence="2">Colocalizes with P4HB/PDI in the endoplasmic reticulum.</text>
</comment>
<protein>
    <recommendedName>
        <fullName>Microsomal triglyceride transfer protein large subunit</fullName>
    </recommendedName>
</protein>
<reference key="1">
    <citation type="journal article" date="1994" name="J. Biol. Chem.">
        <title>Cloning and regulation of hamster microsomal triglyceride transfer protein. The regulation is independent from that of other hepatic and intestinal proteins which participate in the transport of fatty acids and triglycerides.</title>
        <authorList>
            <person name="Lin M.C."/>
            <person name="Arbeeny C."/>
            <person name="Bergquist K."/>
            <person name="Kienzle B."/>
            <person name="Gordon D.A."/>
            <person name="Wetterau J.R."/>
        </authorList>
    </citation>
    <scope>NUCLEOTIDE SEQUENCE [MRNA]</scope>
    <source>
        <tissue>Intestine</tissue>
    </source>
</reference>
<dbReference type="EMBL" id="U14995">
    <property type="protein sequence ID" value="AAA53143.1"/>
    <property type="molecule type" value="mRNA"/>
</dbReference>
<dbReference type="PIR" id="A55413">
    <property type="entry name" value="A55413"/>
</dbReference>
<dbReference type="RefSeq" id="NP_001268537.1">
    <property type="nucleotide sequence ID" value="NM_001281608.1"/>
</dbReference>
<dbReference type="SMR" id="P55158"/>
<dbReference type="STRING" id="10036.ENSMAUP00000009869"/>
<dbReference type="GeneID" id="101836921"/>
<dbReference type="KEGG" id="maua:101836921"/>
<dbReference type="CTD" id="4547"/>
<dbReference type="eggNOG" id="KOG4337">
    <property type="taxonomic scope" value="Eukaryota"/>
</dbReference>
<dbReference type="OrthoDB" id="5865932at2759"/>
<dbReference type="Proteomes" id="UP000189706">
    <property type="component" value="Unplaced"/>
</dbReference>
<dbReference type="GO" id="GO:0016323">
    <property type="term" value="C:basolateral plasma membrane"/>
    <property type="evidence" value="ECO:0007669"/>
    <property type="project" value="TreeGrafter"/>
</dbReference>
<dbReference type="GO" id="GO:0005783">
    <property type="term" value="C:endoplasmic reticulum"/>
    <property type="evidence" value="ECO:0000250"/>
    <property type="project" value="UniProtKB"/>
</dbReference>
<dbReference type="GO" id="GO:0005794">
    <property type="term" value="C:Golgi apparatus"/>
    <property type="evidence" value="ECO:0000250"/>
    <property type="project" value="UniProtKB"/>
</dbReference>
<dbReference type="GO" id="GO:1902388">
    <property type="term" value="F:ceramide 1-phosphate transfer activity"/>
    <property type="evidence" value="ECO:0000250"/>
    <property type="project" value="UniProtKB"/>
</dbReference>
<dbReference type="GO" id="GO:0120020">
    <property type="term" value="F:cholesterol transfer activity"/>
    <property type="evidence" value="ECO:0000250"/>
    <property type="project" value="UniProtKB"/>
</dbReference>
<dbReference type="GO" id="GO:0008289">
    <property type="term" value="F:lipid binding"/>
    <property type="evidence" value="ECO:0007669"/>
    <property type="project" value="UniProtKB-KW"/>
</dbReference>
<dbReference type="GO" id="GO:0120019">
    <property type="term" value="F:phosphatidylcholine transfer activity"/>
    <property type="evidence" value="ECO:0000250"/>
    <property type="project" value="UniProtKB"/>
</dbReference>
<dbReference type="GO" id="GO:1904121">
    <property type="term" value="F:phosphatidylethanolamine transfer activity"/>
    <property type="evidence" value="ECO:0000250"/>
    <property type="project" value="UniProtKB"/>
</dbReference>
<dbReference type="GO" id="GO:0120014">
    <property type="term" value="F:phospholipid transfer activity"/>
    <property type="evidence" value="ECO:0000250"/>
    <property type="project" value="UniProtKB"/>
</dbReference>
<dbReference type="GO" id="GO:0046982">
    <property type="term" value="F:protein heterodimerization activity"/>
    <property type="evidence" value="ECO:0000250"/>
    <property type="project" value="UniProtKB"/>
</dbReference>
<dbReference type="GO" id="GO:0140344">
    <property type="term" value="F:triglyceride transfer activity"/>
    <property type="evidence" value="ECO:0000250"/>
    <property type="project" value="UniProtKB"/>
</dbReference>
<dbReference type="GO" id="GO:0042632">
    <property type="term" value="P:cholesterol homeostasis"/>
    <property type="evidence" value="ECO:0007669"/>
    <property type="project" value="TreeGrafter"/>
</dbReference>
<dbReference type="GO" id="GO:0042157">
    <property type="term" value="P:lipoprotein metabolic process"/>
    <property type="evidence" value="ECO:0007669"/>
    <property type="project" value="TreeGrafter"/>
</dbReference>
<dbReference type="GO" id="GO:0015914">
    <property type="term" value="P:phospholipid transport"/>
    <property type="evidence" value="ECO:0000250"/>
    <property type="project" value="UniProtKB"/>
</dbReference>
<dbReference type="GO" id="GO:0034377">
    <property type="term" value="P:plasma lipoprotein particle assembly"/>
    <property type="evidence" value="ECO:0000250"/>
    <property type="project" value="UniProtKB"/>
</dbReference>
<dbReference type="GO" id="GO:0009306">
    <property type="term" value="P:protein secretion"/>
    <property type="evidence" value="ECO:0000250"/>
    <property type="project" value="UniProtKB"/>
</dbReference>
<dbReference type="GO" id="GO:0034197">
    <property type="term" value="P:triglyceride transport"/>
    <property type="evidence" value="ECO:0000250"/>
    <property type="project" value="UniProtKB"/>
</dbReference>
<dbReference type="FunFam" id="2.30.230.10:FF:000001">
    <property type="entry name" value="Microsomal triglyceride transfer protein large subunit"/>
    <property type="match status" value="1"/>
</dbReference>
<dbReference type="FunFam" id="1.25.10.20:FF:000001">
    <property type="entry name" value="microsomal triglyceride transfer protein large subunit"/>
    <property type="match status" value="1"/>
</dbReference>
<dbReference type="Gene3D" id="2.30.230.10">
    <property type="entry name" value="Lipovitellin, beta-sheet shell regions, chain A"/>
    <property type="match status" value="1"/>
</dbReference>
<dbReference type="Gene3D" id="1.25.10.20">
    <property type="entry name" value="Vitellinogen, superhelical"/>
    <property type="match status" value="1"/>
</dbReference>
<dbReference type="InterPro" id="IPR015819">
    <property type="entry name" value="Lipid_transp_b-sht_shell"/>
</dbReference>
<dbReference type="InterPro" id="IPR011030">
    <property type="entry name" value="Lipovitellin_superhlx_dom"/>
</dbReference>
<dbReference type="InterPro" id="IPR045811">
    <property type="entry name" value="MTP_lip-bd"/>
</dbReference>
<dbReference type="InterPro" id="IPR039988">
    <property type="entry name" value="MTTP"/>
</dbReference>
<dbReference type="InterPro" id="IPR015816">
    <property type="entry name" value="Vitellinogen_b-sht_N"/>
</dbReference>
<dbReference type="InterPro" id="IPR001747">
    <property type="entry name" value="Vitellogenin_N"/>
</dbReference>
<dbReference type="PANTHER" id="PTHR13024:SF1">
    <property type="entry name" value="MICROSOMAL TRIGLYCERIDE TRANSFER PROTEIN LARGE SUBUNIT"/>
    <property type="match status" value="1"/>
</dbReference>
<dbReference type="PANTHER" id="PTHR13024">
    <property type="entry name" value="MICROSOMAL TRIGLYCERIDE TRANSFER PROTEIN, LARGE SUBUNIT"/>
    <property type="match status" value="1"/>
</dbReference>
<dbReference type="Pfam" id="PF19444">
    <property type="entry name" value="MTP_lip_bd"/>
    <property type="match status" value="1"/>
</dbReference>
<dbReference type="Pfam" id="PF01347">
    <property type="entry name" value="Vitellogenin_N"/>
    <property type="match status" value="1"/>
</dbReference>
<dbReference type="SMART" id="SM00638">
    <property type="entry name" value="LPD_N"/>
    <property type="match status" value="1"/>
</dbReference>
<dbReference type="SUPFAM" id="SSF56968">
    <property type="entry name" value="Lipovitellin-phosvitin complex, beta-sheet shell regions"/>
    <property type="match status" value="1"/>
</dbReference>
<dbReference type="SUPFAM" id="SSF48431">
    <property type="entry name" value="Lipovitellin-phosvitin complex, superhelical domain"/>
    <property type="match status" value="1"/>
</dbReference>
<dbReference type="PROSITE" id="PS51211">
    <property type="entry name" value="VITELLOGENIN"/>
    <property type="match status" value="1"/>
</dbReference>
<sequence>MILLAVLFLCFFSSYSASVKGHTTGLSLNNERLYKLTYSTEVFLDGGKGKLKDSVGYRISSDVDVVLLWRNPDGDDDQLIQVTITAVNVENVNQQRGEKSIFKGKTTPKIIGKDNLEALQRPVLLHLVRGKVKEFYSYENEPVGIENLKRGLASLFQMQLSSGTTNEVDISGDCKVTYQAQQDKVVKTKALDTCKIERSGFTTVNQVLGVSSKATSVTTYKIEDSFVTAVHAEETRDFSLNFLQAIAGKIVSKQKLELKTTEAGPRMVPGKQVAGVIKALDSKYTAIPIVGQVLQSACQGCPSLAEHWQSIRKHLEPENLSNAKAVSSFLAFIQHLRTARREEILQILKAEKKEVLPQLVDAVTSAQTPDSLEAILDFLDFKSDSSIVLQERFLYACGFASHPDEELLRALLSKFKGSFASNDIRETVMIIIGALVRKLCQNEGCKLKAVVEAKKLILGGLEKPEKKEDTTMYLLALKNALLPEGIPLLLKYAEAGEGPVSHLATTVLQRYDVSFITDEVKKTLNRIYHQNRKIHEKTVRTTAAAVILKSNPSYMDVKNILLSIGELPKEMNKYMLTFVRDILNFEMPSSKMIRRVLKEMVAHNYDRFSKSGSSSAYTGYIERSPHAASTYSLDMLYSGSGILRRSNLNVFQYLGKAGLHGSQVVIEAQGLESLIAATPDEGEENLDSYAGMSAILFDVQLRPVTFFNGYSDLMSKMLSASGDPVSVVKGLILLIDHSQDIQLQSGLKANMEIQGGLAIDISGSMEFSLWYRESKTRVKNRVAVVIDSAVTVDSSFVKAGLESRAETEAGLEFISTVQFSQYPFLVCMQMDRAEAPFRQFETKYERLSTGRGYVSRRRKESLVSGYELPLHQENSEMCNMVFPPQPESDNSGGWF</sequence>
<evidence type="ECO:0000250" key="1">
    <source>
        <dbReference type="UniProtKB" id="O08601"/>
    </source>
</evidence>
<evidence type="ECO:0000250" key="2">
    <source>
        <dbReference type="UniProtKB" id="P55157"/>
    </source>
</evidence>
<evidence type="ECO:0000255" key="3"/>
<evidence type="ECO:0000255" key="4">
    <source>
        <dbReference type="PROSITE-ProRule" id="PRU00557"/>
    </source>
</evidence>
<accession>P55158</accession>
<feature type="signal peptide" evidence="3">
    <location>
        <begin position="1"/>
        <end position="18"/>
    </location>
</feature>
<feature type="chain" id="PRO_0000041594" description="Microsomal triglyceride transfer protein large subunit">
    <location>
        <begin position="19"/>
        <end position="895"/>
    </location>
</feature>
<feature type="domain" description="Vitellogenin" evidence="4">
    <location>
        <begin position="28"/>
        <end position="659"/>
    </location>
</feature>
<feature type="disulfide bond" evidence="4">
    <location>
        <begin position="174"/>
        <end position="194"/>
    </location>
</feature>
<organism>
    <name type="scientific">Mesocricetus auratus</name>
    <name type="common">Golden hamster</name>
    <dbReference type="NCBI Taxonomy" id="10036"/>
    <lineage>
        <taxon>Eukaryota</taxon>
        <taxon>Metazoa</taxon>
        <taxon>Chordata</taxon>
        <taxon>Craniata</taxon>
        <taxon>Vertebrata</taxon>
        <taxon>Euteleostomi</taxon>
        <taxon>Mammalia</taxon>
        <taxon>Eutheria</taxon>
        <taxon>Euarchontoglires</taxon>
        <taxon>Glires</taxon>
        <taxon>Rodentia</taxon>
        <taxon>Myomorpha</taxon>
        <taxon>Muroidea</taxon>
        <taxon>Cricetidae</taxon>
        <taxon>Cricetinae</taxon>
        <taxon>Mesocricetus</taxon>
    </lineage>
</organism>
<proteinExistence type="evidence at transcript level"/>